<accession>Q9CQG9</accession>
<organism>
    <name type="scientific">Mus musculus</name>
    <name type="common">Mouse</name>
    <dbReference type="NCBI Taxonomy" id="10090"/>
    <lineage>
        <taxon>Eukaryota</taxon>
        <taxon>Metazoa</taxon>
        <taxon>Chordata</taxon>
        <taxon>Craniata</taxon>
        <taxon>Vertebrata</taxon>
        <taxon>Euteleostomi</taxon>
        <taxon>Mammalia</taxon>
        <taxon>Eutheria</taxon>
        <taxon>Euarchontoglires</taxon>
        <taxon>Glires</taxon>
        <taxon>Rodentia</taxon>
        <taxon>Myomorpha</taxon>
        <taxon>Muroidea</taxon>
        <taxon>Muridae</taxon>
        <taxon>Murinae</taxon>
        <taxon>Mus</taxon>
        <taxon>Mus</taxon>
    </lineage>
</organism>
<gene>
    <name type="primary">Tmem100</name>
</gene>
<keyword id="KW-1003">Cell membrane</keyword>
<keyword id="KW-0963">Cytoplasm</keyword>
<keyword id="KW-0217">Developmental protein</keyword>
<keyword id="KW-0221">Differentiation</keyword>
<keyword id="KW-0903">Direct protein sequencing</keyword>
<keyword id="KW-0256">Endoplasmic reticulum</keyword>
<keyword id="KW-0472">Membrane</keyword>
<keyword id="KW-0597">Phosphoprotein</keyword>
<keyword id="KW-1185">Reference proteome</keyword>
<keyword id="KW-0812">Transmembrane</keyword>
<keyword id="KW-1133">Transmembrane helix</keyword>
<sequence>MTEESTKENLGAPKSPTPVTMEKNPKREVVVTTGPLVSEVQLMAATGGAELSCYRCIIPFAVVVFITGIVVTAVAYSFNSHGSIISIFGLVLLSSGLFLLASSALCWKVRQRNKKVKRRESQTALVVNQRCLFA</sequence>
<dbReference type="EMBL" id="AK003574">
    <property type="protein sequence ID" value="BAB22866.1"/>
    <property type="molecule type" value="mRNA"/>
</dbReference>
<dbReference type="EMBL" id="AK007878">
    <property type="protein sequence ID" value="BAB25325.1"/>
    <property type="molecule type" value="mRNA"/>
</dbReference>
<dbReference type="EMBL" id="AL645932">
    <property type="status" value="NOT_ANNOTATED_CDS"/>
    <property type="molecule type" value="Genomic_DNA"/>
</dbReference>
<dbReference type="EMBL" id="BC034841">
    <property type="protein sequence ID" value="AAH34841.1"/>
    <property type="molecule type" value="mRNA"/>
</dbReference>
<dbReference type="CCDS" id="CCDS25239.1"/>
<dbReference type="RefSeq" id="NP_080709.1">
    <property type="nucleotide sequence ID" value="NM_026433.2"/>
</dbReference>
<dbReference type="RefSeq" id="XP_006534093.1">
    <property type="nucleotide sequence ID" value="XM_006534030.5"/>
</dbReference>
<dbReference type="RefSeq" id="XP_006534094.1">
    <property type="nucleotide sequence ID" value="XM_006534031.2"/>
</dbReference>
<dbReference type="RefSeq" id="XP_036012816.1">
    <property type="nucleotide sequence ID" value="XM_036156923.1"/>
</dbReference>
<dbReference type="SMR" id="Q9CQG9"/>
<dbReference type="CORUM" id="Q9CQG9"/>
<dbReference type="FunCoup" id="Q9CQG9">
    <property type="interactions" value="361"/>
</dbReference>
<dbReference type="STRING" id="10090.ENSMUSP00000090464"/>
<dbReference type="iPTMnet" id="Q9CQG9"/>
<dbReference type="PhosphoSitePlus" id="Q9CQG9"/>
<dbReference type="SwissPalm" id="Q9CQG9"/>
<dbReference type="jPOST" id="Q9CQG9"/>
<dbReference type="PaxDb" id="10090-ENSMUSP00000090464"/>
<dbReference type="ProteomicsDB" id="260671"/>
<dbReference type="Antibodypedia" id="56967">
    <property type="antibodies" value="173 antibodies from 21 providers"/>
</dbReference>
<dbReference type="DNASU" id="67888"/>
<dbReference type="Ensembl" id="ENSMUST00000092788.4">
    <property type="protein sequence ID" value="ENSMUSP00000090464.4"/>
    <property type="gene ID" value="ENSMUSG00000069763.4"/>
</dbReference>
<dbReference type="GeneID" id="67888"/>
<dbReference type="KEGG" id="mmu:67888"/>
<dbReference type="UCSC" id="uc007kwm.1">
    <property type="organism name" value="mouse"/>
</dbReference>
<dbReference type="AGR" id="MGI:1915138"/>
<dbReference type="CTD" id="55273"/>
<dbReference type="MGI" id="MGI:1915138">
    <property type="gene designation" value="Tmem100"/>
</dbReference>
<dbReference type="VEuPathDB" id="HostDB:ENSMUSG00000069763"/>
<dbReference type="eggNOG" id="ENOG502RZCB">
    <property type="taxonomic scope" value="Eukaryota"/>
</dbReference>
<dbReference type="GeneTree" id="ENSGT00940000154322"/>
<dbReference type="HOGENOM" id="CLU_141108_0_0_1"/>
<dbReference type="InParanoid" id="Q9CQG9"/>
<dbReference type="OMA" id="PMTMEKS"/>
<dbReference type="OrthoDB" id="9893370at2759"/>
<dbReference type="PhylomeDB" id="Q9CQG9"/>
<dbReference type="TreeFam" id="TF332068"/>
<dbReference type="BioGRID-ORCS" id="67888">
    <property type="hits" value="3 hits in 78 CRISPR screens"/>
</dbReference>
<dbReference type="PRO" id="PR:Q9CQG9"/>
<dbReference type="Proteomes" id="UP000000589">
    <property type="component" value="Chromosome 11"/>
</dbReference>
<dbReference type="RNAct" id="Q9CQG9">
    <property type="molecule type" value="protein"/>
</dbReference>
<dbReference type="Bgee" id="ENSMUSG00000069763">
    <property type="expression patterns" value="Expressed in right lung lobe and 228 other cell types or tissues"/>
</dbReference>
<dbReference type="GO" id="GO:0005783">
    <property type="term" value="C:endoplasmic reticulum"/>
    <property type="evidence" value="ECO:0000250"/>
    <property type="project" value="UniProtKB"/>
</dbReference>
<dbReference type="GO" id="GO:0043204">
    <property type="term" value="C:perikaryon"/>
    <property type="evidence" value="ECO:0000314"/>
    <property type="project" value="UniProtKB"/>
</dbReference>
<dbReference type="GO" id="GO:0048471">
    <property type="term" value="C:perinuclear region of cytoplasm"/>
    <property type="evidence" value="ECO:0000314"/>
    <property type="project" value="MGI"/>
</dbReference>
<dbReference type="GO" id="GO:0005886">
    <property type="term" value="C:plasma membrane"/>
    <property type="evidence" value="ECO:0000314"/>
    <property type="project" value="UniProtKB"/>
</dbReference>
<dbReference type="GO" id="GO:0001525">
    <property type="term" value="P:angiogenesis"/>
    <property type="evidence" value="ECO:0000315"/>
    <property type="project" value="MGI"/>
</dbReference>
<dbReference type="GO" id="GO:0060842">
    <property type="term" value="P:arterial endothelial cell differentiation"/>
    <property type="evidence" value="ECO:0000315"/>
    <property type="project" value="MGI"/>
</dbReference>
<dbReference type="GO" id="GO:0030509">
    <property type="term" value="P:BMP signaling pathway"/>
    <property type="evidence" value="ECO:0000250"/>
    <property type="project" value="UniProtKB"/>
</dbReference>
<dbReference type="GO" id="GO:0071773">
    <property type="term" value="P:cellular response to BMP stimulus"/>
    <property type="evidence" value="ECO:0000250"/>
    <property type="project" value="UniProtKB"/>
</dbReference>
<dbReference type="GO" id="GO:0003197">
    <property type="term" value="P:endocardial cushion development"/>
    <property type="evidence" value="ECO:0000315"/>
    <property type="project" value="MGI"/>
</dbReference>
<dbReference type="GO" id="GO:0003198">
    <property type="term" value="P:epithelial to mesenchymal transition involved in endocardial cushion formation"/>
    <property type="evidence" value="ECO:0000315"/>
    <property type="project" value="MGI"/>
</dbReference>
<dbReference type="GO" id="GO:0001701">
    <property type="term" value="P:in utero embryonic development"/>
    <property type="evidence" value="ECO:0000315"/>
    <property type="project" value="MGI"/>
</dbReference>
<dbReference type="GO" id="GO:0007219">
    <property type="term" value="P:Notch signaling pathway"/>
    <property type="evidence" value="ECO:0000315"/>
    <property type="project" value="MGI"/>
</dbReference>
<dbReference type="GO" id="GO:0045603">
    <property type="term" value="P:positive regulation of endothelial cell differentiation"/>
    <property type="evidence" value="ECO:0000315"/>
    <property type="project" value="UniProtKB"/>
</dbReference>
<dbReference type="GO" id="GO:0051897">
    <property type="term" value="P:positive regulation of phosphatidylinositol 3-kinase/protein kinase B signal transduction"/>
    <property type="evidence" value="ECO:0000315"/>
    <property type="project" value="MGI"/>
</dbReference>
<dbReference type="GO" id="GO:2001214">
    <property type="term" value="P:positive regulation of vasculogenesis"/>
    <property type="evidence" value="ECO:0000315"/>
    <property type="project" value="UniProtKB"/>
</dbReference>
<dbReference type="GO" id="GO:0050848">
    <property type="term" value="P:regulation of calcium-mediated signaling"/>
    <property type="evidence" value="ECO:0000315"/>
    <property type="project" value="MGI"/>
</dbReference>
<dbReference type="GO" id="GO:0051930">
    <property type="term" value="P:regulation of sensory perception of pain"/>
    <property type="evidence" value="ECO:0000315"/>
    <property type="project" value="UniProtKB"/>
</dbReference>
<dbReference type="GO" id="GO:0001570">
    <property type="term" value="P:vasculogenesis"/>
    <property type="evidence" value="ECO:0000315"/>
    <property type="project" value="MGI"/>
</dbReference>
<dbReference type="InterPro" id="IPR032536">
    <property type="entry name" value="TMEM100"/>
</dbReference>
<dbReference type="PANTHER" id="PTHR16100">
    <property type="entry name" value="PHOSPHOINOSITIDE-INTERACTING PROTEIN FAMILY MEMBER"/>
    <property type="match status" value="1"/>
</dbReference>
<dbReference type="PANTHER" id="PTHR16100:SF5">
    <property type="entry name" value="TRANSMEMBRANE PROTEIN 100"/>
    <property type="match status" value="1"/>
</dbReference>
<dbReference type="Pfam" id="PF16311">
    <property type="entry name" value="TMEM100"/>
    <property type="match status" value="1"/>
</dbReference>
<name>TM100_MOUSE</name>
<protein>
    <recommendedName>
        <fullName>Transmembrane protein 100</fullName>
    </recommendedName>
</protein>
<comment type="function">
    <text evidence="6 8">Plays a role during embryonic arterial endothelium differentiation and vascular morphogenesis through the ACVRL1 receptor-dependent signaling pathway upon stimulation by bone morphogenetic proteins, such as GDF2/BMP9 and BMP10 (PubMed:22783020). Involved in the regulation of nociception, acting as a modulator of the interaction between TRPA1 and TRPV1, two molecular sensors and mediators of pain signals in dorsal root ganglia (DRG) neurons (PubMed:25640077). Mechanistically, it weakens their interaction, thereby releasing the inhibition of TRPA1 by TRPV1 and increasing the single-channel open probability of the TRPA1-TRPV1 complex (PubMed:25640077).</text>
</comment>
<comment type="subunit">
    <text evidence="8 9">Interacts (via C-terminus) with TRPA1 and TRPV1 (PubMed:25640077). Interacts with TASOR (PubMed:31112734).</text>
</comment>
<comment type="subcellular location">
    <subcellularLocation>
        <location evidence="7 8">Cell membrane</location>
        <topology evidence="7 8">Multi-pass membrane protein</topology>
    </subcellularLocation>
    <subcellularLocation>
        <location evidence="10">Membrane</location>
        <topology evidence="10">Multi-pass membrane protein</topology>
    </subcellularLocation>
    <subcellularLocation>
        <location evidence="7">Perikaryon</location>
    </subcellularLocation>
    <subcellularLocation>
        <location evidence="1">Cytoplasm</location>
        <location evidence="1">Perinuclear region</location>
    </subcellularLocation>
    <subcellularLocation>
        <location evidence="1">Endoplasmic reticulum</location>
    </subcellularLocation>
    <text evidence="1">Colocalized with HSPA5 in the endoplasmic reticulum (ER). Enriched in ER microsome. Colocalized with BMP4 in neural cell bodies and neural fibers of the enteric nervous system (By similarity).</text>
</comment>
<comment type="tissue specificity">
    <text evidence="6 7 8">Expressed in dorsal root ganglia. Expressed in neurons as well as nerve fiber bundles connecting ganglia and fibers innervating muscle layer of the gastric body, jejunum, and proximal colon. Expressed in arterial endothelial cells and neurons of the central nervous system and peripheral nervous system (at protein level). Expressed strongly in lung, weakly in brain, heart and muscle. Expressed in enteric neurons and vascular tissue in the muscularis propria of the gastrointestinal tract.</text>
</comment>
<comment type="developmental stage">
    <text evidence="5 6">Expressed in embryo at 8.5 dpc. Expressed in arterial endothelial cells of the pharyngeal arch artery and endocardium at 9.5 dpc, onward. Expressed in dorsal aorta, pharyngeal arch and primitive internal carotid arteries at 11.5 dpc. Expressed also in intersomitic, mesenchephalic, metencephalic and anterior choroidal arteries at 12.5 dpc. Expressed in the ventral neural tube of the embryo.</text>
</comment>
<comment type="disruption phenotype">
    <text evidence="5 6 8">Mice die at a mid- or late-gestational period. Show embryonic lethality due to impaired differentiation of arterial endothelium and defects of vascular morphogenesis (PubMed:22783020). Conditional knockout in endothelial cells show similar vascular defects to those observed in global null mice (PubMed:20848592, PubMed:22783020). Conditional knockout mice lacking Tmem100 in dorsal root ganglia (DRG) primary sensory neurons, exhibit normal mechanical sensitivity but reduced acute nocifensive behaviors induced by mustard oil, consistent with a reduction in inflammatory mechanical hyperalgesia and TRPA1- but not TRPV1-mediated pain (PubMed:25640077).</text>
</comment>
<feature type="chain" id="PRO_0000240847" description="Transmembrane protein 100">
    <location>
        <begin position="1"/>
        <end position="134"/>
    </location>
</feature>
<feature type="transmembrane region" description="Helical" evidence="3">
    <location>
        <begin position="56"/>
        <end position="76"/>
    </location>
</feature>
<feature type="transmembrane region" description="Helical" evidence="3">
    <location>
        <begin position="84"/>
        <end position="104"/>
    </location>
</feature>
<feature type="region of interest" description="Disordered" evidence="4">
    <location>
        <begin position="1"/>
        <end position="23"/>
    </location>
</feature>
<feature type="modified residue" description="Phosphoserine" evidence="2">
    <location>
        <position position="15"/>
    </location>
</feature>
<feature type="modified residue" description="Phosphoserine" evidence="11">
    <location>
        <position position="121"/>
    </location>
</feature>
<feature type="mutagenesis site" description="Abolishes interaction with TRPA1. Increases interaction with TRPV1. Enhances interaction between TRPA1 and TRPV1." evidence="8">
    <original>KRR</original>
    <variation>QQQ</variation>
    <location>
        <begin position="117"/>
        <end position="119"/>
    </location>
</feature>
<reference key="1">
    <citation type="journal article" date="2005" name="Science">
        <title>The transcriptional landscape of the mammalian genome.</title>
        <authorList>
            <person name="Carninci P."/>
            <person name="Kasukawa T."/>
            <person name="Katayama S."/>
            <person name="Gough J."/>
            <person name="Frith M.C."/>
            <person name="Maeda N."/>
            <person name="Oyama R."/>
            <person name="Ravasi T."/>
            <person name="Lenhard B."/>
            <person name="Wells C."/>
            <person name="Kodzius R."/>
            <person name="Shimokawa K."/>
            <person name="Bajic V.B."/>
            <person name="Brenner S.E."/>
            <person name="Batalov S."/>
            <person name="Forrest A.R."/>
            <person name="Zavolan M."/>
            <person name="Davis M.J."/>
            <person name="Wilming L.G."/>
            <person name="Aidinis V."/>
            <person name="Allen J.E."/>
            <person name="Ambesi-Impiombato A."/>
            <person name="Apweiler R."/>
            <person name="Aturaliya R.N."/>
            <person name="Bailey T.L."/>
            <person name="Bansal M."/>
            <person name="Baxter L."/>
            <person name="Beisel K.W."/>
            <person name="Bersano T."/>
            <person name="Bono H."/>
            <person name="Chalk A.M."/>
            <person name="Chiu K.P."/>
            <person name="Choudhary V."/>
            <person name="Christoffels A."/>
            <person name="Clutterbuck D.R."/>
            <person name="Crowe M.L."/>
            <person name="Dalla E."/>
            <person name="Dalrymple B.P."/>
            <person name="de Bono B."/>
            <person name="Della Gatta G."/>
            <person name="di Bernardo D."/>
            <person name="Down T."/>
            <person name="Engstrom P."/>
            <person name="Fagiolini M."/>
            <person name="Faulkner G."/>
            <person name="Fletcher C.F."/>
            <person name="Fukushima T."/>
            <person name="Furuno M."/>
            <person name="Futaki S."/>
            <person name="Gariboldi M."/>
            <person name="Georgii-Hemming P."/>
            <person name="Gingeras T.R."/>
            <person name="Gojobori T."/>
            <person name="Green R.E."/>
            <person name="Gustincich S."/>
            <person name="Harbers M."/>
            <person name="Hayashi Y."/>
            <person name="Hensch T.K."/>
            <person name="Hirokawa N."/>
            <person name="Hill D."/>
            <person name="Huminiecki L."/>
            <person name="Iacono M."/>
            <person name="Ikeo K."/>
            <person name="Iwama A."/>
            <person name="Ishikawa T."/>
            <person name="Jakt M."/>
            <person name="Kanapin A."/>
            <person name="Katoh M."/>
            <person name="Kawasawa Y."/>
            <person name="Kelso J."/>
            <person name="Kitamura H."/>
            <person name="Kitano H."/>
            <person name="Kollias G."/>
            <person name="Krishnan S.P."/>
            <person name="Kruger A."/>
            <person name="Kummerfeld S.K."/>
            <person name="Kurochkin I.V."/>
            <person name="Lareau L.F."/>
            <person name="Lazarevic D."/>
            <person name="Lipovich L."/>
            <person name="Liu J."/>
            <person name="Liuni S."/>
            <person name="McWilliam S."/>
            <person name="Madan Babu M."/>
            <person name="Madera M."/>
            <person name="Marchionni L."/>
            <person name="Matsuda H."/>
            <person name="Matsuzawa S."/>
            <person name="Miki H."/>
            <person name="Mignone F."/>
            <person name="Miyake S."/>
            <person name="Morris K."/>
            <person name="Mottagui-Tabar S."/>
            <person name="Mulder N."/>
            <person name="Nakano N."/>
            <person name="Nakauchi H."/>
            <person name="Ng P."/>
            <person name="Nilsson R."/>
            <person name="Nishiguchi S."/>
            <person name="Nishikawa S."/>
            <person name="Nori F."/>
            <person name="Ohara O."/>
            <person name="Okazaki Y."/>
            <person name="Orlando V."/>
            <person name="Pang K.C."/>
            <person name="Pavan W.J."/>
            <person name="Pavesi G."/>
            <person name="Pesole G."/>
            <person name="Petrovsky N."/>
            <person name="Piazza S."/>
            <person name="Reed J."/>
            <person name="Reid J.F."/>
            <person name="Ring B.Z."/>
            <person name="Ringwald M."/>
            <person name="Rost B."/>
            <person name="Ruan Y."/>
            <person name="Salzberg S.L."/>
            <person name="Sandelin A."/>
            <person name="Schneider C."/>
            <person name="Schoenbach C."/>
            <person name="Sekiguchi K."/>
            <person name="Semple C.A."/>
            <person name="Seno S."/>
            <person name="Sessa L."/>
            <person name="Sheng Y."/>
            <person name="Shibata Y."/>
            <person name="Shimada H."/>
            <person name="Shimada K."/>
            <person name="Silva D."/>
            <person name="Sinclair B."/>
            <person name="Sperling S."/>
            <person name="Stupka E."/>
            <person name="Sugiura K."/>
            <person name="Sultana R."/>
            <person name="Takenaka Y."/>
            <person name="Taki K."/>
            <person name="Tammoja K."/>
            <person name="Tan S.L."/>
            <person name="Tang S."/>
            <person name="Taylor M.S."/>
            <person name="Tegner J."/>
            <person name="Teichmann S.A."/>
            <person name="Ueda H.R."/>
            <person name="van Nimwegen E."/>
            <person name="Verardo R."/>
            <person name="Wei C.L."/>
            <person name="Yagi K."/>
            <person name="Yamanishi H."/>
            <person name="Zabarovsky E."/>
            <person name="Zhu S."/>
            <person name="Zimmer A."/>
            <person name="Hide W."/>
            <person name="Bult C."/>
            <person name="Grimmond S.M."/>
            <person name="Teasdale R.D."/>
            <person name="Liu E.T."/>
            <person name="Brusic V."/>
            <person name="Quackenbush J."/>
            <person name="Wahlestedt C."/>
            <person name="Mattick J.S."/>
            <person name="Hume D.A."/>
            <person name="Kai C."/>
            <person name="Sasaki D."/>
            <person name="Tomaru Y."/>
            <person name="Fukuda S."/>
            <person name="Kanamori-Katayama M."/>
            <person name="Suzuki M."/>
            <person name="Aoki J."/>
            <person name="Arakawa T."/>
            <person name="Iida J."/>
            <person name="Imamura K."/>
            <person name="Itoh M."/>
            <person name="Kato T."/>
            <person name="Kawaji H."/>
            <person name="Kawagashira N."/>
            <person name="Kawashima T."/>
            <person name="Kojima M."/>
            <person name="Kondo S."/>
            <person name="Konno H."/>
            <person name="Nakano K."/>
            <person name="Ninomiya N."/>
            <person name="Nishio T."/>
            <person name="Okada M."/>
            <person name="Plessy C."/>
            <person name="Shibata K."/>
            <person name="Shiraki T."/>
            <person name="Suzuki S."/>
            <person name="Tagami M."/>
            <person name="Waki K."/>
            <person name="Watahiki A."/>
            <person name="Okamura-Oho Y."/>
            <person name="Suzuki H."/>
            <person name="Kawai J."/>
            <person name="Hayashizaki Y."/>
        </authorList>
    </citation>
    <scope>NUCLEOTIDE SEQUENCE [LARGE SCALE MRNA]</scope>
    <source>
        <strain>C57BL/6J</strain>
        <tissue>Embryo</tissue>
        <tissue>Pancreas</tissue>
    </source>
</reference>
<reference key="2">
    <citation type="journal article" date="2009" name="PLoS Biol.">
        <title>Lineage-specific biology revealed by a finished genome assembly of the mouse.</title>
        <authorList>
            <person name="Church D.M."/>
            <person name="Goodstadt L."/>
            <person name="Hillier L.W."/>
            <person name="Zody M.C."/>
            <person name="Goldstein S."/>
            <person name="She X."/>
            <person name="Bult C.J."/>
            <person name="Agarwala R."/>
            <person name="Cherry J.L."/>
            <person name="DiCuccio M."/>
            <person name="Hlavina W."/>
            <person name="Kapustin Y."/>
            <person name="Meric P."/>
            <person name="Maglott D."/>
            <person name="Birtle Z."/>
            <person name="Marques A.C."/>
            <person name="Graves T."/>
            <person name="Zhou S."/>
            <person name="Teague B."/>
            <person name="Potamousis K."/>
            <person name="Churas C."/>
            <person name="Place M."/>
            <person name="Herschleb J."/>
            <person name="Runnheim R."/>
            <person name="Forrest D."/>
            <person name="Amos-Landgraf J."/>
            <person name="Schwartz D.C."/>
            <person name="Cheng Z."/>
            <person name="Lindblad-Toh K."/>
            <person name="Eichler E.E."/>
            <person name="Ponting C.P."/>
        </authorList>
    </citation>
    <scope>NUCLEOTIDE SEQUENCE [LARGE SCALE GENOMIC DNA]</scope>
    <source>
        <strain>C57BL/6J</strain>
    </source>
</reference>
<reference key="3">
    <citation type="journal article" date="2004" name="Genome Res.">
        <title>The status, quality, and expansion of the NIH full-length cDNA project: the Mammalian Gene Collection (MGC).</title>
        <authorList>
            <consortium name="The MGC Project Team"/>
        </authorList>
    </citation>
    <scope>NUCLEOTIDE SEQUENCE [LARGE SCALE MRNA]</scope>
    <source>
        <strain>C57BL/6J</strain>
        <tissue>Thymus</tissue>
    </source>
</reference>
<reference key="4">
    <citation type="submission" date="2009-01" db="UniProtKB">
        <authorList>
            <person name="Lubec G."/>
            <person name="Sunyer B."/>
            <person name="Chen W.-Q."/>
        </authorList>
    </citation>
    <scope>PROTEIN SEQUENCE OF 8-23</scope>
    <scope>IDENTIFICATION BY MASS SPECTROMETRY</scope>
    <source>
        <strain>OF1</strain>
        <tissue>Hippocampus</tissue>
    </source>
</reference>
<reference key="5">
    <citation type="journal article" date="2010" name="Cell">
        <title>A tissue-specific atlas of mouse protein phosphorylation and expression.</title>
        <authorList>
            <person name="Huttlin E.L."/>
            <person name="Jedrychowski M.P."/>
            <person name="Elias J.E."/>
            <person name="Goswami T."/>
            <person name="Rad R."/>
            <person name="Beausoleil S.A."/>
            <person name="Villen J."/>
            <person name="Haas W."/>
            <person name="Sowa M.E."/>
            <person name="Gygi S.P."/>
        </authorList>
    </citation>
    <scope>PHOSPHORYLATION [LARGE SCALE ANALYSIS] AT SER-121</scope>
    <scope>IDENTIFICATION BY MASS SPECTROMETRY [LARGE SCALE ANALYSIS]</scope>
    <source>
        <tissue>Kidney</tissue>
        <tissue>Lung</tissue>
    </source>
</reference>
<reference key="6">
    <citation type="journal article" date="2010" name="Genesis">
        <title>Generation of mice with a conditional and reporter allele for Tmem100.</title>
        <authorList>
            <person name="Moon E.H."/>
            <person name="Kim M.J."/>
            <person name="Ko K.S."/>
            <person name="Kim Y.S."/>
            <person name="Seo J."/>
            <person name="Oh S.P."/>
            <person name="Lee Y.J."/>
        </authorList>
    </citation>
    <scope>DEVELOPMENTAL STAGE</scope>
    <scope>DISRUPTION PHENOTYPE</scope>
    <scope>CONDITIONAL KNOCKOUT</scope>
</reference>
<reference key="7">
    <citation type="journal article" date="2012" name="Proc. Natl. Acad. Sci. U.S.A.">
        <title>Tmem100, an ALK1 receptor signaling-dependent gene essential for arterial endothelium differentiation and vascular morphogenesis.</title>
        <authorList>
            <person name="Somekawa S."/>
            <person name="Imagawa K."/>
            <person name="Hayashi H."/>
            <person name="Sakabe M."/>
            <person name="Ioka T."/>
            <person name="Sato G.E."/>
            <person name="Inada K."/>
            <person name="Iwamoto T."/>
            <person name="Mori T."/>
            <person name="Uemura S."/>
            <person name="Nakagawa O."/>
            <person name="Saito Y."/>
        </authorList>
    </citation>
    <scope>FUNCTION</scope>
    <scope>DISRUPTION PHENOTYPE</scope>
    <scope>CONDITIONAL KNOCKOUT</scope>
    <scope>TISSUE SPECIFICITY</scope>
    <scope>DEVELOPMENTAL STAGE</scope>
</reference>
<reference key="8">
    <citation type="journal article" date="2013" name="Neuroscience">
        <title>Distribution of TMEM100 in the mouse and human gastrointestinal tract--a novel marker of enteric nerves.</title>
        <authorList>
            <person name="Eisenman S.T."/>
            <person name="Gibbons S.J."/>
            <person name="Singh R.D."/>
            <person name="Bernard C.E."/>
            <person name="Wu J."/>
            <person name="Sarr M.G."/>
            <person name="Kendrick M.L."/>
            <person name="Larson D.W."/>
            <person name="Dozois E.J."/>
            <person name="Shen K.R."/>
            <person name="Farrugia G."/>
        </authorList>
    </citation>
    <scope>SUBCELLULAR LOCATION</scope>
    <scope>TISSUE SPECIFICITY</scope>
</reference>
<reference key="9">
    <citation type="journal article" date="2015" name="Neuron">
        <title>Tmem100 Is a regulator of TRPA1-TRPV1 complex and contributes to persistent pain.</title>
        <authorList>
            <person name="Weng H.J."/>
            <person name="Patel K.N."/>
            <person name="Jeske N.A."/>
            <person name="Bierbower S.M."/>
            <person name="Zou W."/>
            <person name="Tiwari V."/>
            <person name="Zheng Q."/>
            <person name="Tang Z."/>
            <person name="Mo G.C."/>
            <person name="Wang Y."/>
            <person name="Geng Y."/>
            <person name="Zhang J."/>
            <person name="Guan Y."/>
            <person name="Akopian A.N."/>
            <person name="Dong X."/>
        </authorList>
    </citation>
    <scope>FUNCTION</scope>
    <scope>SUBCELLULAR LOCATION</scope>
    <scope>TISSUE SPECIFICITY</scope>
    <scope>DISRUPTION PHENOTYPE</scope>
    <scope>MUTAGENESIS OF 117-LYS--ARG-119</scope>
    <scope>INTERACTION WITH TRPA1 AND TRPV1</scope>
</reference>
<reference key="10">
    <citation type="journal article" date="2019" name="Exp. Cell Res.">
        <title>Fam208a orchestrates interaction protein network essential for early embryonic development and cell division.</title>
        <authorList>
            <person name="Gresakova V."/>
            <person name="Novosadova V."/>
            <person name="Prochazkova M."/>
            <person name="Bhargava S."/>
            <person name="Jenickova I."/>
            <person name="Prochazka J."/>
            <person name="Sedlacek R."/>
        </authorList>
    </citation>
    <scope>INTERACTION WITH TASOR</scope>
</reference>
<proteinExistence type="evidence at protein level"/>
<evidence type="ECO:0000250" key="1"/>
<evidence type="ECO:0000250" key="2">
    <source>
        <dbReference type="UniProtKB" id="Q569C0"/>
    </source>
</evidence>
<evidence type="ECO:0000255" key="3"/>
<evidence type="ECO:0000256" key="4">
    <source>
        <dbReference type="SAM" id="MobiDB-lite"/>
    </source>
</evidence>
<evidence type="ECO:0000269" key="5">
    <source>
    </source>
</evidence>
<evidence type="ECO:0000269" key="6">
    <source>
    </source>
</evidence>
<evidence type="ECO:0000269" key="7">
    <source>
    </source>
</evidence>
<evidence type="ECO:0000269" key="8">
    <source>
    </source>
</evidence>
<evidence type="ECO:0000269" key="9">
    <source>
    </source>
</evidence>
<evidence type="ECO:0000305" key="10"/>
<evidence type="ECO:0007744" key="11">
    <source>
    </source>
</evidence>